<comment type="function">
    <text evidence="1">Catalyzes the conversion of D-ribulose 5-phosphate to formate and 3,4-dihydroxy-2-butanone 4-phosphate.</text>
</comment>
<comment type="catalytic activity">
    <reaction evidence="1">
        <text>D-ribulose 5-phosphate = (2S)-2-hydroxy-3-oxobutyl phosphate + formate + H(+)</text>
        <dbReference type="Rhea" id="RHEA:18457"/>
        <dbReference type="ChEBI" id="CHEBI:15378"/>
        <dbReference type="ChEBI" id="CHEBI:15740"/>
        <dbReference type="ChEBI" id="CHEBI:58121"/>
        <dbReference type="ChEBI" id="CHEBI:58830"/>
        <dbReference type="EC" id="4.1.99.12"/>
    </reaction>
</comment>
<comment type="cofactor">
    <cofactor evidence="1">
        <name>Mg(2+)</name>
        <dbReference type="ChEBI" id="CHEBI:18420"/>
    </cofactor>
    <cofactor evidence="1">
        <name>Mn(2+)</name>
        <dbReference type="ChEBI" id="CHEBI:29035"/>
    </cofactor>
    <text evidence="1">Binds 2 divalent metal cations per subunit. Magnesium or manganese.</text>
</comment>
<comment type="pathway">
    <text evidence="1">Cofactor biosynthesis; riboflavin biosynthesis; 2-hydroxy-3-oxobutyl phosphate from D-ribulose 5-phosphate: step 1/1.</text>
</comment>
<comment type="subunit">
    <text evidence="1">Homodimer.</text>
</comment>
<comment type="similarity">
    <text evidence="1">Belongs to the DHBP synthase family.</text>
</comment>
<organism>
    <name type="scientific">Shewanella loihica (strain ATCC BAA-1088 / PV-4)</name>
    <dbReference type="NCBI Taxonomy" id="323850"/>
    <lineage>
        <taxon>Bacteria</taxon>
        <taxon>Pseudomonadati</taxon>
        <taxon>Pseudomonadota</taxon>
        <taxon>Gammaproteobacteria</taxon>
        <taxon>Alteromonadales</taxon>
        <taxon>Shewanellaceae</taxon>
        <taxon>Shewanella</taxon>
    </lineage>
</organism>
<evidence type="ECO:0000255" key="1">
    <source>
        <dbReference type="HAMAP-Rule" id="MF_00180"/>
    </source>
</evidence>
<sequence length="217" mass="23316">MNQSLLSPFGDAITRVEAALTALRAGQGVLVVDDEDRENEGDLIYSAEHLTQEQMALLIRECSGIVCLCLTDERVKQLELPPMVEDNSSQYGTAFTVSIEAKVGVTTGVSAADRVTTIKAAIADDAKPSDLARPGHVYPLRAQPGGVLTRRGHTEGTIDLMKLAGLKPAGVLCEVTNVNGTMARLPEIIAFGEQHKMPVLTIEDIVCYRKSLLEKAS</sequence>
<name>RIBB_SHELP</name>
<dbReference type="EC" id="4.1.99.12" evidence="1"/>
<dbReference type="EMBL" id="CP000606">
    <property type="protein sequence ID" value="ABO21913.1"/>
    <property type="molecule type" value="Genomic_DNA"/>
</dbReference>
<dbReference type="RefSeq" id="WP_011863850.1">
    <property type="nucleotide sequence ID" value="NC_009092.1"/>
</dbReference>
<dbReference type="SMR" id="A3Q8W5"/>
<dbReference type="STRING" id="323850.Shew_0040"/>
<dbReference type="KEGG" id="slo:Shew_0040"/>
<dbReference type="eggNOG" id="COG0108">
    <property type="taxonomic scope" value="Bacteria"/>
</dbReference>
<dbReference type="HOGENOM" id="CLU_020273_3_0_6"/>
<dbReference type="OrthoDB" id="9793111at2"/>
<dbReference type="UniPathway" id="UPA00275">
    <property type="reaction ID" value="UER00399"/>
</dbReference>
<dbReference type="Proteomes" id="UP000001558">
    <property type="component" value="Chromosome"/>
</dbReference>
<dbReference type="GO" id="GO:0005829">
    <property type="term" value="C:cytosol"/>
    <property type="evidence" value="ECO:0007669"/>
    <property type="project" value="TreeGrafter"/>
</dbReference>
<dbReference type="GO" id="GO:0008686">
    <property type="term" value="F:3,4-dihydroxy-2-butanone-4-phosphate synthase activity"/>
    <property type="evidence" value="ECO:0007669"/>
    <property type="project" value="UniProtKB-UniRule"/>
</dbReference>
<dbReference type="GO" id="GO:0000287">
    <property type="term" value="F:magnesium ion binding"/>
    <property type="evidence" value="ECO:0007669"/>
    <property type="project" value="UniProtKB-UniRule"/>
</dbReference>
<dbReference type="GO" id="GO:0030145">
    <property type="term" value="F:manganese ion binding"/>
    <property type="evidence" value="ECO:0007669"/>
    <property type="project" value="UniProtKB-UniRule"/>
</dbReference>
<dbReference type="GO" id="GO:0009231">
    <property type="term" value="P:riboflavin biosynthetic process"/>
    <property type="evidence" value="ECO:0007669"/>
    <property type="project" value="UniProtKB-UniRule"/>
</dbReference>
<dbReference type="FunFam" id="3.90.870.10:FF:000002">
    <property type="entry name" value="3,4-dihydroxy-2-butanone 4-phosphate synthase"/>
    <property type="match status" value="1"/>
</dbReference>
<dbReference type="Gene3D" id="3.90.870.10">
    <property type="entry name" value="DHBP synthase"/>
    <property type="match status" value="1"/>
</dbReference>
<dbReference type="HAMAP" id="MF_00180">
    <property type="entry name" value="RibB"/>
    <property type="match status" value="1"/>
</dbReference>
<dbReference type="InterPro" id="IPR017945">
    <property type="entry name" value="DHBP_synth_RibB-like_a/b_dom"/>
</dbReference>
<dbReference type="InterPro" id="IPR000422">
    <property type="entry name" value="DHBP_synthase_RibB"/>
</dbReference>
<dbReference type="NCBIfam" id="TIGR00506">
    <property type="entry name" value="ribB"/>
    <property type="match status" value="1"/>
</dbReference>
<dbReference type="PANTHER" id="PTHR21327:SF38">
    <property type="entry name" value="3,4-DIHYDROXY-2-BUTANONE 4-PHOSPHATE SYNTHASE"/>
    <property type="match status" value="1"/>
</dbReference>
<dbReference type="PANTHER" id="PTHR21327">
    <property type="entry name" value="GTP CYCLOHYDROLASE II-RELATED"/>
    <property type="match status" value="1"/>
</dbReference>
<dbReference type="Pfam" id="PF00926">
    <property type="entry name" value="DHBP_synthase"/>
    <property type="match status" value="1"/>
</dbReference>
<dbReference type="SUPFAM" id="SSF55821">
    <property type="entry name" value="YrdC/RibB"/>
    <property type="match status" value="1"/>
</dbReference>
<proteinExistence type="inferred from homology"/>
<protein>
    <recommendedName>
        <fullName evidence="1">3,4-dihydroxy-2-butanone 4-phosphate synthase</fullName>
        <shortName evidence="1">DHBP synthase</shortName>
        <ecNumber evidence="1">4.1.99.12</ecNumber>
    </recommendedName>
</protein>
<reference key="1">
    <citation type="submission" date="2007-03" db="EMBL/GenBank/DDBJ databases">
        <title>Complete sequence of Shewanella loihica PV-4.</title>
        <authorList>
            <consortium name="US DOE Joint Genome Institute"/>
            <person name="Copeland A."/>
            <person name="Lucas S."/>
            <person name="Lapidus A."/>
            <person name="Barry K."/>
            <person name="Detter J.C."/>
            <person name="Glavina del Rio T."/>
            <person name="Hammon N."/>
            <person name="Israni S."/>
            <person name="Dalin E."/>
            <person name="Tice H."/>
            <person name="Pitluck S."/>
            <person name="Chain P."/>
            <person name="Malfatti S."/>
            <person name="Shin M."/>
            <person name="Vergez L."/>
            <person name="Schmutz J."/>
            <person name="Larimer F."/>
            <person name="Land M."/>
            <person name="Hauser L."/>
            <person name="Kyrpides N."/>
            <person name="Mikhailova N."/>
            <person name="Romine M.F."/>
            <person name="Serres G."/>
            <person name="Fredrickson J."/>
            <person name="Tiedje J."/>
            <person name="Richardson P."/>
        </authorList>
    </citation>
    <scope>NUCLEOTIDE SEQUENCE [LARGE SCALE GENOMIC DNA]</scope>
    <source>
        <strain>ATCC BAA-1088 / PV-4</strain>
    </source>
</reference>
<feature type="chain" id="PRO_1000040628" description="3,4-dihydroxy-2-butanone 4-phosphate synthase">
    <location>
        <begin position="1"/>
        <end position="217"/>
    </location>
</feature>
<feature type="binding site" evidence="1">
    <location>
        <begin position="37"/>
        <end position="38"/>
    </location>
    <ligand>
        <name>D-ribulose 5-phosphate</name>
        <dbReference type="ChEBI" id="CHEBI:58121"/>
    </ligand>
</feature>
<feature type="binding site" evidence="1">
    <location>
        <position position="38"/>
    </location>
    <ligand>
        <name>Mg(2+)</name>
        <dbReference type="ChEBI" id="CHEBI:18420"/>
        <label>1</label>
    </ligand>
</feature>
<feature type="binding site" evidence="1">
    <location>
        <position position="38"/>
    </location>
    <ligand>
        <name>Mg(2+)</name>
        <dbReference type="ChEBI" id="CHEBI:18420"/>
        <label>2</label>
    </ligand>
</feature>
<feature type="binding site" evidence="1">
    <location>
        <position position="42"/>
    </location>
    <ligand>
        <name>D-ribulose 5-phosphate</name>
        <dbReference type="ChEBI" id="CHEBI:58121"/>
    </ligand>
</feature>
<feature type="binding site" evidence="1">
    <location>
        <begin position="150"/>
        <end position="154"/>
    </location>
    <ligand>
        <name>D-ribulose 5-phosphate</name>
        <dbReference type="ChEBI" id="CHEBI:58121"/>
    </ligand>
</feature>
<feature type="binding site" evidence="1">
    <location>
        <position position="153"/>
    </location>
    <ligand>
        <name>Mg(2+)</name>
        <dbReference type="ChEBI" id="CHEBI:18420"/>
        <label>2</label>
    </ligand>
</feature>
<feature type="binding site" evidence="1">
    <location>
        <position position="174"/>
    </location>
    <ligand>
        <name>D-ribulose 5-phosphate</name>
        <dbReference type="ChEBI" id="CHEBI:58121"/>
    </ligand>
</feature>
<feature type="site" description="Essential for catalytic activity" evidence="1">
    <location>
        <position position="136"/>
    </location>
</feature>
<feature type="site" description="Essential for catalytic activity" evidence="1">
    <location>
        <position position="174"/>
    </location>
</feature>
<accession>A3Q8W5</accession>
<gene>
    <name evidence="1" type="primary">ribB</name>
    <name type="ordered locus">Shew_0040</name>
</gene>
<keyword id="KW-0456">Lyase</keyword>
<keyword id="KW-0460">Magnesium</keyword>
<keyword id="KW-0464">Manganese</keyword>
<keyword id="KW-0479">Metal-binding</keyword>
<keyword id="KW-1185">Reference proteome</keyword>
<keyword id="KW-0686">Riboflavin biosynthesis</keyword>